<accession>Q1JLR5</accession>
<feature type="chain" id="PRO_1000005449" description="NAD kinase">
    <location>
        <begin position="1"/>
        <end position="279"/>
    </location>
</feature>
<feature type="active site" description="Proton acceptor" evidence="1">
    <location>
        <position position="57"/>
    </location>
</feature>
<feature type="binding site" evidence="1">
    <location>
        <begin position="57"/>
        <end position="58"/>
    </location>
    <ligand>
        <name>NAD(+)</name>
        <dbReference type="ChEBI" id="CHEBI:57540"/>
    </ligand>
</feature>
<feature type="binding site" evidence="1">
    <location>
        <begin position="133"/>
        <end position="134"/>
    </location>
    <ligand>
        <name>NAD(+)</name>
        <dbReference type="ChEBI" id="CHEBI:57540"/>
    </ligand>
</feature>
<feature type="binding site" evidence="1">
    <location>
        <position position="159"/>
    </location>
    <ligand>
        <name>NAD(+)</name>
        <dbReference type="ChEBI" id="CHEBI:57540"/>
    </ligand>
</feature>
<feature type="binding site" evidence="1">
    <location>
        <position position="161"/>
    </location>
    <ligand>
        <name>NAD(+)</name>
        <dbReference type="ChEBI" id="CHEBI:57540"/>
    </ligand>
</feature>
<feature type="binding site" evidence="1">
    <location>
        <begin position="172"/>
        <end position="177"/>
    </location>
    <ligand>
        <name>NAD(+)</name>
        <dbReference type="ChEBI" id="CHEBI:57540"/>
    </ligand>
</feature>
<proteinExistence type="inferred from homology"/>
<comment type="function">
    <text evidence="1">Involved in the regulation of the intracellular balance of NAD and NADP, and is a key enzyme in the biosynthesis of NADP. Catalyzes specifically the phosphorylation on 2'-hydroxyl of the adenosine moiety of NAD to yield NADP.</text>
</comment>
<comment type="catalytic activity">
    <reaction evidence="1">
        <text>NAD(+) + ATP = ADP + NADP(+) + H(+)</text>
        <dbReference type="Rhea" id="RHEA:18629"/>
        <dbReference type="ChEBI" id="CHEBI:15378"/>
        <dbReference type="ChEBI" id="CHEBI:30616"/>
        <dbReference type="ChEBI" id="CHEBI:57540"/>
        <dbReference type="ChEBI" id="CHEBI:58349"/>
        <dbReference type="ChEBI" id="CHEBI:456216"/>
        <dbReference type="EC" id="2.7.1.23"/>
    </reaction>
</comment>
<comment type="cofactor">
    <cofactor evidence="1">
        <name>a divalent metal cation</name>
        <dbReference type="ChEBI" id="CHEBI:60240"/>
    </cofactor>
</comment>
<comment type="subcellular location">
    <subcellularLocation>
        <location evidence="1">Cytoplasm</location>
    </subcellularLocation>
</comment>
<comment type="similarity">
    <text evidence="1">Belongs to the NAD kinase family.</text>
</comment>
<sequence>MMTQMNYTGKVKRVAIIANGKYQSKRVASKLFSVFKDDPDFYLSKKNPDIVISIGGDGMLLSAFHMYEKELDKVRFVGIHTGHLGFYTDYRDFEVDKLIDNLRKDKGEQISYPILKVAITLDDGRVVKARALNEATVKRIEKTMVADVIINHVKFESFRGDGISVSTPTGSTAYNKSLGGAVLHPTIEALQLTEISSLNNRVFRTLGSSIIIPKKDKIELVPKRLGIYTISIDNKTYQLKNVTKVEYFIDDEKIHFVSSPSHTSFWERVKDAFIGETDS</sequence>
<name>NADK_STRPC</name>
<organism>
    <name type="scientific">Streptococcus pyogenes serotype M12 (strain MGAS9429)</name>
    <dbReference type="NCBI Taxonomy" id="370551"/>
    <lineage>
        <taxon>Bacteria</taxon>
        <taxon>Bacillati</taxon>
        <taxon>Bacillota</taxon>
        <taxon>Bacilli</taxon>
        <taxon>Lactobacillales</taxon>
        <taxon>Streptococcaceae</taxon>
        <taxon>Streptococcus</taxon>
    </lineage>
</organism>
<dbReference type="EC" id="2.7.1.23" evidence="1"/>
<dbReference type="EMBL" id="CP000259">
    <property type="protein sequence ID" value="ABF32154.1"/>
    <property type="molecule type" value="Genomic_DNA"/>
</dbReference>
<dbReference type="SMR" id="Q1JLR5"/>
<dbReference type="KEGG" id="spk:MGAS9429_Spy0967"/>
<dbReference type="HOGENOM" id="CLU_008831_0_3_9"/>
<dbReference type="Proteomes" id="UP000002433">
    <property type="component" value="Chromosome"/>
</dbReference>
<dbReference type="GO" id="GO:0005737">
    <property type="term" value="C:cytoplasm"/>
    <property type="evidence" value="ECO:0007669"/>
    <property type="project" value="UniProtKB-SubCell"/>
</dbReference>
<dbReference type="GO" id="GO:0005524">
    <property type="term" value="F:ATP binding"/>
    <property type="evidence" value="ECO:0007669"/>
    <property type="project" value="UniProtKB-KW"/>
</dbReference>
<dbReference type="GO" id="GO:0046872">
    <property type="term" value="F:metal ion binding"/>
    <property type="evidence" value="ECO:0007669"/>
    <property type="project" value="UniProtKB-UniRule"/>
</dbReference>
<dbReference type="GO" id="GO:0051287">
    <property type="term" value="F:NAD binding"/>
    <property type="evidence" value="ECO:0007669"/>
    <property type="project" value="UniProtKB-ARBA"/>
</dbReference>
<dbReference type="GO" id="GO:0003951">
    <property type="term" value="F:NAD+ kinase activity"/>
    <property type="evidence" value="ECO:0007669"/>
    <property type="project" value="UniProtKB-UniRule"/>
</dbReference>
<dbReference type="GO" id="GO:0019674">
    <property type="term" value="P:NAD metabolic process"/>
    <property type="evidence" value="ECO:0007669"/>
    <property type="project" value="InterPro"/>
</dbReference>
<dbReference type="GO" id="GO:0006741">
    <property type="term" value="P:NADP biosynthetic process"/>
    <property type="evidence" value="ECO:0007669"/>
    <property type="project" value="UniProtKB-UniRule"/>
</dbReference>
<dbReference type="Gene3D" id="3.40.50.10330">
    <property type="entry name" value="Probable inorganic polyphosphate/atp-NAD kinase, domain 1"/>
    <property type="match status" value="1"/>
</dbReference>
<dbReference type="Gene3D" id="2.60.200.30">
    <property type="entry name" value="Probable inorganic polyphosphate/atp-NAD kinase, domain 2"/>
    <property type="match status" value="1"/>
</dbReference>
<dbReference type="HAMAP" id="MF_00361">
    <property type="entry name" value="NAD_kinase"/>
    <property type="match status" value="1"/>
</dbReference>
<dbReference type="InterPro" id="IPR017438">
    <property type="entry name" value="ATP-NAD_kinase_N"/>
</dbReference>
<dbReference type="InterPro" id="IPR017437">
    <property type="entry name" value="ATP-NAD_kinase_PpnK-typ_C"/>
</dbReference>
<dbReference type="InterPro" id="IPR016064">
    <property type="entry name" value="NAD/diacylglycerol_kinase_sf"/>
</dbReference>
<dbReference type="InterPro" id="IPR002504">
    <property type="entry name" value="NADK"/>
</dbReference>
<dbReference type="NCBIfam" id="NF003424">
    <property type="entry name" value="PRK04885.1"/>
    <property type="match status" value="1"/>
</dbReference>
<dbReference type="PANTHER" id="PTHR20275">
    <property type="entry name" value="NAD KINASE"/>
    <property type="match status" value="1"/>
</dbReference>
<dbReference type="PANTHER" id="PTHR20275:SF0">
    <property type="entry name" value="NAD KINASE"/>
    <property type="match status" value="1"/>
</dbReference>
<dbReference type="Pfam" id="PF01513">
    <property type="entry name" value="NAD_kinase"/>
    <property type="match status" value="1"/>
</dbReference>
<dbReference type="Pfam" id="PF20143">
    <property type="entry name" value="NAD_kinase_C"/>
    <property type="match status" value="1"/>
</dbReference>
<dbReference type="SUPFAM" id="SSF111331">
    <property type="entry name" value="NAD kinase/diacylglycerol kinase-like"/>
    <property type="match status" value="1"/>
</dbReference>
<protein>
    <recommendedName>
        <fullName evidence="1">NAD kinase</fullName>
        <ecNumber evidence="1">2.7.1.23</ecNumber>
    </recommendedName>
    <alternativeName>
        <fullName evidence="1">ATP-dependent NAD kinase</fullName>
    </alternativeName>
</protein>
<reference key="1">
    <citation type="journal article" date="2006" name="Proc. Natl. Acad. Sci. U.S.A.">
        <title>Molecular genetic anatomy of inter- and intraserotype variation in the human bacterial pathogen group A Streptococcus.</title>
        <authorList>
            <person name="Beres S.B."/>
            <person name="Richter E.W."/>
            <person name="Nagiec M.J."/>
            <person name="Sumby P."/>
            <person name="Porcella S.F."/>
            <person name="DeLeo F.R."/>
            <person name="Musser J.M."/>
        </authorList>
    </citation>
    <scope>NUCLEOTIDE SEQUENCE [LARGE SCALE GENOMIC DNA]</scope>
    <source>
        <strain>MGAS9429</strain>
    </source>
</reference>
<gene>
    <name evidence="1" type="primary">nadK</name>
    <name type="ordered locus">MGAS9429_Spy0967</name>
</gene>
<evidence type="ECO:0000255" key="1">
    <source>
        <dbReference type="HAMAP-Rule" id="MF_00361"/>
    </source>
</evidence>
<keyword id="KW-0067">ATP-binding</keyword>
<keyword id="KW-0963">Cytoplasm</keyword>
<keyword id="KW-0418">Kinase</keyword>
<keyword id="KW-0520">NAD</keyword>
<keyword id="KW-0521">NADP</keyword>
<keyword id="KW-0547">Nucleotide-binding</keyword>
<keyword id="KW-0808">Transferase</keyword>